<proteinExistence type="evidence at protein level"/>
<reference key="1">
    <citation type="journal article" date="2004" name="Nat. Genet.">
        <title>Complete sequencing and characterization of 21,243 full-length human cDNAs.</title>
        <authorList>
            <person name="Ota T."/>
            <person name="Suzuki Y."/>
            <person name="Nishikawa T."/>
            <person name="Otsuki T."/>
            <person name="Sugiyama T."/>
            <person name="Irie R."/>
            <person name="Wakamatsu A."/>
            <person name="Hayashi K."/>
            <person name="Sato H."/>
            <person name="Nagai K."/>
            <person name="Kimura K."/>
            <person name="Makita H."/>
            <person name="Sekine M."/>
            <person name="Obayashi M."/>
            <person name="Nishi T."/>
            <person name="Shibahara T."/>
            <person name="Tanaka T."/>
            <person name="Ishii S."/>
            <person name="Yamamoto J."/>
            <person name="Saito K."/>
            <person name="Kawai Y."/>
            <person name="Isono Y."/>
            <person name="Nakamura Y."/>
            <person name="Nagahari K."/>
            <person name="Murakami K."/>
            <person name="Yasuda T."/>
            <person name="Iwayanagi T."/>
            <person name="Wagatsuma M."/>
            <person name="Shiratori A."/>
            <person name="Sudo H."/>
            <person name="Hosoiri T."/>
            <person name="Kaku Y."/>
            <person name="Kodaira H."/>
            <person name="Kondo H."/>
            <person name="Sugawara M."/>
            <person name="Takahashi M."/>
            <person name="Kanda K."/>
            <person name="Yokoi T."/>
            <person name="Furuya T."/>
            <person name="Kikkawa E."/>
            <person name="Omura Y."/>
            <person name="Abe K."/>
            <person name="Kamihara K."/>
            <person name="Katsuta N."/>
            <person name="Sato K."/>
            <person name="Tanikawa M."/>
            <person name="Yamazaki M."/>
            <person name="Ninomiya K."/>
            <person name="Ishibashi T."/>
            <person name="Yamashita H."/>
            <person name="Murakawa K."/>
            <person name="Fujimori K."/>
            <person name="Tanai H."/>
            <person name="Kimata M."/>
            <person name="Watanabe M."/>
            <person name="Hiraoka S."/>
            <person name="Chiba Y."/>
            <person name="Ishida S."/>
            <person name="Ono Y."/>
            <person name="Takiguchi S."/>
            <person name="Watanabe S."/>
            <person name="Yosida M."/>
            <person name="Hotuta T."/>
            <person name="Kusano J."/>
            <person name="Kanehori K."/>
            <person name="Takahashi-Fujii A."/>
            <person name="Hara H."/>
            <person name="Tanase T.-O."/>
            <person name="Nomura Y."/>
            <person name="Togiya S."/>
            <person name="Komai F."/>
            <person name="Hara R."/>
            <person name="Takeuchi K."/>
            <person name="Arita M."/>
            <person name="Imose N."/>
            <person name="Musashino K."/>
            <person name="Yuuki H."/>
            <person name="Oshima A."/>
            <person name="Sasaki N."/>
            <person name="Aotsuka S."/>
            <person name="Yoshikawa Y."/>
            <person name="Matsunawa H."/>
            <person name="Ichihara T."/>
            <person name="Shiohata N."/>
            <person name="Sano S."/>
            <person name="Moriya S."/>
            <person name="Momiyama H."/>
            <person name="Satoh N."/>
            <person name="Takami S."/>
            <person name="Terashima Y."/>
            <person name="Suzuki O."/>
            <person name="Nakagawa S."/>
            <person name="Senoh A."/>
            <person name="Mizoguchi H."/>
            <person name="Goto Y."/>
            <person name="Shimizu F."/>
            <person name="Wakebe H."/>
            <person name="Hishigaki H."/>
            <person name="Watanabe T."/>
            <person name="Sugiyama A."/>
            <person name="Takemoto M."/>
            <person name="Kawakami B."/>
            <person name="Yamazaki M."/>
            <person name="Watanabe K."/>
            <person name="Kumagai A."/>
            <person name="Itakura S."/>
            <person name="Fukuzumi Y."/>
            <person name="Fujimori Y."/>
            <person name="Komiyama M."/>
            <person name="Tashiro H."/>
            <person name="Tanigami A."/>
            <person name="Fujiwara T."/>
            <person name="Ono T."/>
            <person name="Yamada K."/>
            <person name="Fujii Y."/>
            <person name="Ozaki K."/>
            <person name="Hirao M."/>
            <person name="Ohmori Y."/>
            <person name="Kawabata A."/>
            <person name="Hikiji T."/>
            <person name="Kobatake N."/>
            <person name="Inagaki H."/>
            <person name="Ikema Y."/>
            <person name="Okamoto S."/>
            <person name="Okitani R."/>
            <person name="Kawakami T."/>
            <person name="Noguchi S."/>
            <person name="Itoh T."/>
            <person name="Shigeta K."/>
            <person name="Senba T."/>
            <person name="Matsumura K."/>
            <person name="Nakajima Y."/>
            <person name="Mizuno T."/>
            <person name="Morinaga M."/>
            <person name="Sasaki M."/>
            <person name="Togashi T."/>
            <person name="Oyama M."/>
            <person name="Hata H."/>
            <person name="Watanabe M."/>
            <person name="Komatsu T."/>
            <person name="Mizushima-Sugano J."/>
            <person name="Satoh T."/>
            <person name="Shirai Y."/>
            <person name="Takahashi Y."/>
            <person name="Nakagawa K."/>
            <person name="Okumura K."/>
            <person name="Nagase T."/>
            <person name="Nomura N."/>
            <person name="Kikuchi H."/>
            <person name="Masuho Y."/>
            <person name="Yamashita R."/>
            <person name="Nakai K."/>
            <person name="Yada T."/>
            <person name="Nakamura Y."/>
            <person name="Ohara O."/>
            <person name="Isogai T."/>
            <person name="Sugano S."/>
        </authorList>
    </citation>
    <scope>NUCLEOTIDE SEQUENCE [LARGE SCALE MRNA] (ISOFORMS 1 AND 2)</scope>
    <source>
        <tissue>Colon mucosa</tissue>
        <tissue>Thymus</tissue>
    </source>
</reference>
<reference key="2">
    <citation type="submission" date="2005-07" db="EMBL/GenBank/DDBJ databases">
        <authorList>
            <person name="Mural R.J."/>
            <person name="Istrail S."/>
            <person name="Sutton G.G."/>
            <person name="Florea L."/>
            <person name="Halpern A.L."/>
            <person name="Mobarry C.M."/>
            <person name="Lippert R."/>
            <person name="Walenz B."/>
            <person name="Shatkay H."/>
            <person name="Dew I."/>
            <person name="Miller J.R."/>
            <person name="Flanigan M.J."/>
            <person name="Edwards N.J."/>
            <person name="Bolanos R."/>
            <person name="Fasulo D."/>
            <person name="Halldorsson B.V."/>
            <person name="Hannenhalli S."/>
            <person name="Turner R."/>
            <person name="Yooseph S."/>
            <person name="Lu F."/>
            <person name="Nusskern D.R."/>
            <person name="Shue B.C."/>
            <person name="Zheng X.H."/>
            <person name="Zhong F."/>
            <person name="Delcher A.L."/>
            <person name="Huson D.H."/>
            <person name="Kravitz S.A."/>
            <person name="Mouchard L."/>
            <person name="Reinert K."/>
            <person name="Remington K.A."/>
            <person name="Clark A.G."/>
            <person name="Waterman M.S."/>
            <person name="Eichler E.E."/>
            <person name="Adams M.D."/>
            <person name="Hunkapiller M.W."/>
            <person name="Myers E.W."/>
            <person name="Venter J.C."/>
        </authorList>
    </citation>
    <scope>NUCLEOTIDE SEQUENCE [LARGE SCALE GENOMIC DNA]</scope>
</reference>
<reference key="3">
    <citation type="journal article" date="2004" name="Genome Res.">
        <title>The status, quality, and expansion of the NIH full-length cDNA project: the Mammalian Gene Collection (MGC).</title>
        <authorList>
            <consortium name="The MGC Project Team"/>
        </authorList>
    </citation>
    <scope>NUCLEOTIDE SEQUENCE [LARGE SCALE MRNA] (ISOFORM 1)</scope>
    <source>
        <tissue>Lymph</tissue>
    </source>
</reference>
<reference key="4">
    <citation type="journal article" date="2011" name="BMC Syst. Biol.">
        <title>Initial characterization of the human central proteome.</title>
        <authorList>
            <person name="Burkard T.R."/>
            <person name="Planyavsky M."/>
            <person name="Kaupe I."/>
            <person name="Breitwieser F.P."/>
            <person name="Buerckstuemmer T."/>
            <person name="Bennett K.L."/>
            <person name="Superti-Furga G."/>
            <person name="Colinge J."/>
        </authorList>
    </citation>
    <scope>IDENTIFICATION BY MASS SPECTROMETRY [LARGE SCALE ANALYSIS]</scope>
</reference>
<reference key="5">
    <citation type="journal article" date="2013" name="Cell. Signal.">
        <title>Fbxl12 triggers G1 arrest by mediating degradation of calmodulin kinase I.</title>
        <authorList>
            <person name="Mallampalli R.K."/>
            <person name="Kaercher L."/>
            <person name="Snavely C."/>
            <person name="Pulijala R."/>
            <person name="Chen B.B."/>
            <person name="Coon T."/>
            <person name="Zhao J."/>
            <person name="Agassandian M."/>
        </authorList>
    </citation>
    <scope>FUNCTION</scope>
</reference>
<reference key="6">
    <citation type="journal article" date="2011" name="Nature">
        <title>Exome sequencing identifies frequent mutation of the SWI/SNF complex gene PBRM1 in renal carcinoma.</title>
        <authorList>
            <person name="Varela I."/>
            <person name="Tarpey P."/>
            <person name="Raine K."/>
            <person name="Huang D."/>
            <person name="Ong C.K."/>
            <person name="Stephens P."/>
            <person name="Davies H."/>
            <person name="Jones D."/>
            <person name="Lin M.L."/>
            <person name="Teague J."/>
            <person name="Bignell G."/>
            <person name="Butler A."/>
            <person name="Cho J."/>
            <person name="Dalgliesh G.L."/>
            <person name="Galappaththige D."/>
            <person name="Greenman C."/>
            <person name="Hardy C."/>
            <person name="Jia M."/>
            <person name="Latimer C."/>
            <person name="Lau K.W."/>
            <person name="Marshall J."/>
            <person name="McLaren S."/>
            <person name="Menzies A."/>
            <person name="Mudie L."/>
            <person name="Stebbings L."/>
            <person name="Largaespada D.A."/>
            <person name="Wessels L.F.A."/>
            <person name="Richard S."/>
            <person name="Kahnoski R.J."/>
            <person name="Anema J."/>
            <person name="Tuveson D.A."/>
            <person name="Perez-Mancera P.A."/>
            <person name="Mustonen V."/>
            <person name="Fischer A."/>
            <person name="Adams D.J."/>
            <person name="Rust A."/>
            <person name="Chan-On W."/>
            <person name="Subimerb C."/>
            <person name="Dykema K."/>
            <person name="Furge K."/>
            <person name="Campbell P.J."/>
            <person name="Teh B.T."/>
            <person name="Stratton M.R."/>
            <person name="Futreal P.A."/>
        </authorList>
    </citation>
    <scope>VARIANT HIS-63</scope>
</reference>
<protein>
    <recommendedName>
        <fullName>F-box/LRR-repeat protein 12</fullName>
    </recommendedName>
    <alternativeName>
        <fullName>F-box and leucine-rich repeat protein 12</fullName>
    </alternativeName>
    <alternativeName>
        <fullName>F-box protein FBL12</fullName>
    </alternativeName>
</protein>
<keyword id="KW-0025">Alternative splicing</keyword>
<keyword id="KW-0433">Leucine-rich repeat</keyword>
<keyword id="KW-1267">Proteomics identification</keyword>
<keyword id="KW-1185">Reference proteome</keyword>
<keyword id="KW-0677">Repeat</keyword>
<keyword id="KW-0833">Ubl conjugation pathway</keyword>
<gene>
    <name type="primary">FBXL12</name>
    <name type="synonym">FBL12</name>
</gene>
<dbReference type="EMBL" id="AK000195">
    <property type="protein sequence ID" value="BAA91002.1"/>
    <property type="molecule type" value="mRNA"/>
</dbReference>
<dbReference type="EMBL" id="AK027004">
    <property type="protein sequence ID" value="BAB15622.1"/>
    <property type="molecule type" value="mRNA"/>
</dbReference>
<dbReference type="EMBL" id="AK093760">
    <property type="protein sequence ID" value="BAG52760.1"/>
    <property type="molecule type" value="mRNA"/>
</dbReference>
<dbReference type="EMBL" id="CH471106">
    <property type="protein sequence ID" value="EAW84051.1"/>
    <property type="molecule type" value="Genomic_DNA"/>
</dbReference>
<dbReference type="EMBL" id="BC001586">
    <property type="protein sequence ID" value="AAH01586.1"/>
    <property type="molecule type" value="mRNA"/>
</dbReference>
<dbReference type="CCDS" id="CCDS12218.1">
    <molecule id="Q9NXK8-1"/>
</dbReference>
<dbReference type="CCDS" id="CCDS82287.1">
    <molecule id="Q9NXK8-2"/>
</dbReference>
<dbReference type="RefSeq" id="NP_001303865.1">
    <property type="nucleotide sequence ID" value="NM_001316936.1"/>
</dbReference>
<dbReference type="RefSeq" id="NP_001303866.1">
    <molecule id="Q9NXK8-2"/>
    <property type="nucleotide sequence ID" value="NM_001316937.2"/>
</dbReference>
<dbReference type="RefSeq" id="NP_001303867.1">
    <molecule id="Q9NXK8-2"/>
    <property type="nucleotide sequence ID" value="NM_001316938.2"/>
</dbReference>
<dbReference type="RefSeq" id="NP_001303868.1">
    <molecule id="Q9NXK8-2"/>
    <property type="nucleotide sequence ID" value="NM_001316939.2"/>
</dbReference>
<dbReference type="RefSeq" id="NP_001303869.1">
    <molecule id="Q9NXK8-2"/>
    <property type="nucleotide sequence ID" value="NM_001316940.2"/>
</dbReference>
<dbReference type="RefSeq" id="NP_001303870.1">
    <molecule id="Q9NXK8-2"/>
    <property type="nucleotide sequence ID" value="NM_001316941.2"/>
</dbReference>
<dbReference type="RefSeq" id="NP_001303871.1">
    <molecule id="Q9NXK8-2"/>
    <property type="nucleotide sequence ID" value="NM_001316942.2"/>
</dbReference>
<dbReference type="RefSeq" id="NP_060173.1">
    <molecule id="Q9NXK8-1"/>
    <property type="nucleotide sequence ID" value="NM_017703.3"/>
</dbReference>
<dbReference type="SMR" id="Q9NXK8"/>
<dbReference type="BioGRID" id="120200">
    <property type="interactions" value="102"/>
</dbReference>
<dbReference type="ComplexPortal" id="CPX-2658">
    <property type="entry name" value="SCF E3 ubiquitin ligase complex, FBXL12 variant"/>
</dbReference>
<dbReference type="FunCoup" id="Q9NXK8">
    <property type="interactions" value="441"/>
</dbReference>
<dbReference type="IntAct" id="Q9NXK8">
    <property type="interactions" value="38"/>
</dbReference>
<dbReference type="MINT" id="Q9NXK8"/>
<dbReference type="STRING" id="9606.ENSP00000247977"/>
<dbReference type="iPTMnet" id="Q9NXK8"/>
<dbReference type="PhosphoSitePlus" id="Q9NXK8"/>
<dbReference type="BioMuta" id="FBXL12"/>
<dbReference type="DMDM" id="38257780"/>
<dbReference type="jPOST" id="Q9NXK8"/>
<dbReference type="MassIVE" id="Q9NXK8"/>
<dbReference type="PaxDb" id="9606-ENSP00000247977"/>
<dbReference type="PeptideAtlas" id="Q9NXK8"/>
<dbReference type="ProteomicsDB" id="83107">
    <molecule id="Q9NXK8-1"/>
</dbReference>
<dbReference type="ProteomicsDB" id="83108">
    <molecule id="Q9NXK8-2"/>
</dbReference>
<dbReference type="Pumba" id="Q9NXK8"/>
<dbReference type="Antibodypedia" id="25087">
    <property type="antibodies" value="152 antibodies from 26 providers"/>
</dbReference>
<dbReference type="DNASU" id="54850"/>
<dbReference type="Ensembl" id="ENST00000247977.9">
    <molecule id="Q9NXK8-1"/>
    <property type="protein sequence ID" value="ENSP00000247977.3"/>
    <property type="gene ID" value="ENSG00000127452.9"/>
</dbReference>
<dbReference type="Ensembl" id="ENST00000585379.5">
    <molecule id="Q9NXK8-2"/>
    <property type="protein sequence ID" value="ENSP00000467359.1"/>
    <property type="gene ID" value="ENSG00000127452.9"/>
</dbReference>
<dbReference type="Ensembl" id="ENST00000591009.1">
    <molecule id="Q9NXK8-2"/>
    <property type="protein sequence ID" value="ENSP00000468369.1"/>
    <property type="gene ID" value="ENSG00000127452.9"/>
</dbReference>
<dbReference type="GeneID" id="54850"/>
<dbReference type="KEGG" id="hsa:54850"/>
<dbReference type="MANE-Select" id="ENST00000247977.9">
    <property type="protein sequence ID" value="ENSP00000247977.3"/>
    <property type="RefSeq nucleotide sequence ID" value="NM_017703.3"/>
    <property type="RefSeq protein sequence ID" value="NP_060173.1"/>
</dbReference>
<dbReference type="UCSC" id="uc002mme.3">
    <molecule id="Q9NXK8-1"/>
    <property type="organism name" value="human"/>
</dbReference>
<dbReference type="AGR" id="HGNC:13611"/>
<dbReference type="CTD" id="54850"/>
<dbReference type="GeneCards" id="FBXL12"/>
<dbReference type="HGNC" id="HGNC:13611">
    <property type="gene designation" value="FBXL12"/>
</dbReference>
<dbReference type="HPA" id="ENSG00000127452">
    <property type="expression patterns" value="Low tissue specificity"/>
</dbReference>
<dbReference type="MIM" id="609079">
    <property type="type" value="gene"/>
</dbReference>
<dbReference type="neXtProt" id="NX_Q9NXK8"/>
<dbReference type="OpenTargets" id="ENSG00000127452"/>
<dbReference type="PharmGKB" id="PA134934043"/>
<dbReference type="VEuPathDB" id="HostDB:ENSG00000127452"/>
<dbReference type="eggNOG" id="KOG1947">
    <property type="taxonomic scope" value="Eukaryota"/>
</dbReference>
<dbReference type="GeneTree" id="ENSGT00390000003354"/>
<dbReference type="HOGENOM" id="CLU_024577_1_0_1"/>
<dbReference type="InParanoid" id="Q9NXK8"/>
<dbReference type="OMA" id="RGLPHCM"/>
<dbReference type="OrthoDB" id="3219396at2759"/>
<dbReference type="PAN-GO" id="Q9NXK8">
    <property type="GO annotations" value="7 GO annotations based on evolutionary models"/>
</dbReference>
<dbReference type="PhylomeDB" id="Q9NXK8"/>
<dbReference type="TreeFam" id="TF313434"/>
<dbReference type="PathwayCommons" id="Q9NXK8"/>
<dbReference type="Reactome" id="R-HSA-8951664">
    <property type="pathway name" value="Neddylation"/>
</dbReference>
<dbReference type="Reactome" id="R-HSA-983168">
    <property type="pathway name" value="Antigen processing: Ubiquitination &amp; Proteasome degradation"/>
</dbReference>
<dbReference type="SignaLink" id="Q9NXK8"/>
<dbReference type="SIGNOR" id="Q9NXK8"/>
<dbReference type="UniPathway" id="UPA00143"/>
<dbReference type="BioGRID-ORCS" id="54850">
    <property type="hits" value="49 hits in 1200 CRISPR screens"/>
</dbReference>
<dbReference type="ChiTaRS" id="FBXL12">
    <property type="organism name" value="human"/>
</dbReference>
<dbReference type="GenomeRNAi" id="54850"/>
<dbReference type="Pharos" id="Q9NXK8">
    <property type="development level" value="Tdark"/>
</dbReference>
<dbReference type="PRO" id="PR:Q9NXK8"/>
<dbReference type="Proteomes" id="UP000005640">
    <property type="component" value="Chromosome 19"/>
</dbReference>
<dbReference type="RNAct" id="Q9NXK8">
    <property type="molecule type" value="protein"/>
</dbReference>
<dbReference type="Bgee" id="ENSG00000127452">
    <property type="expression patterns" value="Expressed in thymus and 197 other cell types or tissues"/>
</dbReference>
<dbReference type="ExpressionAtlas" id="Q9NXK8">
    <property type="expression patterns" value="baseline and differential"/>
</dbReference>
<dbReference type="GO" id="GO:0005829">
    <property type="term" value="C:cytosol"/>
    <property type="evidence" value="ECO:0000304"/>
    <property type="project" value="Reactome"/>
</dbReference>
<dbReference type="GO" id="GO:0000151">
    <property type="term" value="C:ubiquitin ligase complex"/>
    <property type="evidence" value="ECO:0007669"/>
    <property type="project" value="Ensembl"/>
</dbReference>
<dbReference type="GO" id="GO:0016567">
    <property type="term" value="P:protein ubiquitination"/>
    <property type="evidence" value="ECO:0007669"/>
    <property type="project" value="UniProtKB-UniPathway"/>
</dbReference>
<dbReference type="GO" id="GO:0006511">
    <property type="term" value="P:ubiquitin-dependent protein catabolic process"/>
    <property type="evidence" value="ECO:0007669"/>
    <property type="project" value="Ensembl"/>
</dbReference>
<dbReference type="CDD" id="cd22123">
    <property type="entry name" value="F-box_FBXL12"/>
    <property type="match status" value="1"/>
</dbReference>
<dbReference type="FunFam" id="3.80.10.10:FF:000208">
    <property type="entry name" value="F-box/LRR-repeat protein 12 isoform X1"/>
    <property type="match status" value="1"/>
</dbReference>
<dbReference type="Gene3D" id="3.80.10.10">
    <property type="entry name" value="Ribonuclease Inhibitor"/>
    <property type="match status" value="1"/>
</dbReference>
<dbReference type="InterPro" id="IPR036047">
    <property type="entry name" value="F-box-like_dom_sf"/>
</dbReference>
<dbReference type="InterPro" id="IPR001810">
    <property type="entry name" value="F-box_dom"/>
</dbReference>
<dbReference type="InterPro" id="IPR032675">
    <property type="entry name" value="LRR_dom_sf"/>
</dbReference>
<dbReference type="PANTHER" id="PTHR16134">
    <property type="entry name" value="F-BOX/TPR REPEAT PROTEIN POF3"/>
    <property type="match status" value="1"/>
</dbReference>
<dbReference type="PANTHER" id="PTHR16134:SF153">
    <property type="entry name" value="F-BOX_LRR-REPEAT PROTEIN 12"/>
    <property type="match status" value="1"/>
</dbReference>
<dbReference type="Pfam" id="PF12937">
    <property type="entry name" value="F-box-like"/>
    <property type="match status" value="1"/>
</dbReference>
<dbReference type="SMART" id="SM00256">
    <property type="entry name" value="FBOX"/>
    <property type="match status" value="1"/>
</dbReference>
<dbReference type="SUPFAM" id="SSF81383">
    <property type="entry name" value="F-box domain"/>
    <property type="match status" value="1"/>
</dbReference>
<dbReference type="SUPFAM" id="SSF52047">
    <property type="entry name" value="RNI-like"/>
    <property type="match status" value="1"/>
</dbReference>
<dbReference type="PROSITE" id="PS50181">
    <property type="entry name" value="FBOX"/>
    <property type="match status" value="1"/>
</dbReference>
<organism>
    <name type="scientific">Homo sapiens</name>
    <name type="common">Human</name>
    <dbReference type="NCBI Taxonomy" id="9606"/>
    <lineage>
        <taxon>Eukaryota</taxon>
        <taxon>Metazoa</taxon>
        <taxon>Chordata</taxon>
        <taxon>Craniata</taxon>
        <taxon>Vertebrata</taxon>
        <taxon>Euteleostomi</taxon>
        <taxon>Mammalia</taxon>
        <taxon>Eutheria</taxon>
        <taxon>Euarchontoglires</taxon>
        <taxon>Primates</taxon>
        <taxon>Haplorrhini</taxon>
        <taxon>Catarrhini</taxon>
        <taxon>Hominidae</taxon>
        <taxon>Homo</taxon>
    </lineage>
</organism>
<sequence length="326" mass="37026">MATLVELPDSVLLEIFSYLPVRDRIRISRVCHRWKRLVDDRWLWRHVDLTLYTMRPKVMWHLLRRYMASRLHSLRMGGYLFSGSQAPQLSPALLRALGQKCPNLKRLCLHVADLSMVPITSLPSTLRTLELHSCEISMAWLHKQQDPTVLPLLECIVLDRVPAFRDEHLQGLTRFRALRSLVLGGTYRVTETGLDAGLQELSYLQRLEVLGCTLSADSTLLAISRHLRDVRKIRLTVRGLSAPGLAVLEGMPALESLCLQGPLVTPEMPSPTEILSSCLTMPKLRVLELQGLGWEGQEAEKILCKGLPHCMVIVRACPKESMDWWM</sequence>
<comment type="function">
    <text evidence="4">Substrate-recognition component of the SCF (SKP1-CUL1-F-box protein)-type E3 ubiquitin ligase complex. Mediates the polyubiquitination and proteasomal degradation of CAMK1 leading to disruption of cyclin D1/CDK4 complex assembly which results in G1 cell cycle arrest in lung epithelia.</text>
</comment>
<comment type="pathway">
    <text>Protein modification; protein ubiquitination.</text>
</comment>
<comment type="subunit">
    <text evidence="1">Interacts with SKP1 and CUL1.</text>
</comment>
<comment type="interaction">
    <interactant intactId="EBI-719790">
        <id>Q9NXK8</id>
    </interactant>
    <interactant intactId="EBI-519256">
        <id>P49918</id>
        <label>CDKN1C</label>
    </interactant>
    <organismsDiffer>false</organismsDiffer>
    <experiments>6</experiments>
</comment>
<comment type="interaction">
    <interactant intactId="EBI-719790">
        <id>Q9NXK8</id>
    </interactant>
    <interactant intactId="EBI-10174653">
        <id>Q8NF50-2</id>
        <label>DOCK8</label>
    </interactant>
    <organismsDiffer>false</organismsDiffer>
    <experiments>3</experiments>
</comment>
<comment type="interaction">
    <interactant intactId="EBI-719790">
        <id>Q9NXK8</id>
    </interactant>
    <interactant intactId="EBI-356700">
        <id>P57678</id>
        <label>GEMIN4</label>
    </interactant>
    <organismsDiffer>false</organismsDiffer>
    <experiments>3</experiments>
</comment>
<comment type="interaction">
    <interactant intactId="EBI-719790">
        <id>Q9NXK8</id>
    </interactant>
    <interactant intactId="EBI-739832">
        <id>Q8TBB1</id>
        <label>LNX1</label>
    </interactant>
    <organismsDiffer>false</organismsDiffer>
    <experiments>3</experiments>
</comment>
<comment type="interaction">
    <interactant intactId="EBI-719790">
        <id>Q9NXK8</id>
    </interactant>
    <interactant intactId="EBI-724829">
        <id>Q9H0A6</id>
        <label>RNF32</label>
    </interactant>
    <organismsDiffer>false</organismsDiffer>
    <experiments>2</experiments>
</comment>
<comment type="interaction">
    <interactant intactId="EBI-719790">
        <id>Q9NXK8</id>
    </interactant>
    <interactant intactId="EBI-307486">
        <id>P63208</id>
        <label>SKP1</label>
    </interactant>
    <organismsDiffer>false</organismsDiffer>
    <experiments>10</experiments>
</comment>
<comment type="alternative products">
    <event type="alternative splicing"/>
    <isoform>
        <id>Q9NXK8-1</id>
        <name>1</name>
        <sequence type="displayed"/>
    </isoform>
    <isoform>
        <id>Q9NXK8-2</id>
        <name>2</name>
        <sequence type="described" ref="VSP_008859"/>
    </isoform>
</comment>
<feature type="chain" id="PRO_0000119857" description="F-box/LRR-repeat protein 12">
    <location>
        <begin position="1"/>
        <end position="326"/>
    </location>
</feature>
<feature type="domain" description="F-box" evidence="2">
    <location>
        <begin position="1"/>
        <end position="47"/>
    </location>
</feature>
<feature type="repeat" description="LRR 1">
    <location>
        <begin position="51"/>
        <end position="78"/>
    </location>
</feature>
<feature type="repeat" description="LRR 2">
    <location>
        <begin position="86"/>
        <end position="111"/>
    </location>
</feature>
<feature type="repeat" description="LRR 3">
    <location>
        <begin position="113"/>
        <end position="133"/>
    </location>
</feature>
<feature type="repeat" description="LRR 4">
    <location>
        <begin position="161"/>
        <end position="185"/>
    </location>
</feature>
<feature type="repeat" description="LRR 5">
    <location>
        <begin position="186"/>
        <end position="211"/>
    </location>
</feature>
<feature type="repeat" description="LRR 6">
    <location>
        <begin position="212"/>
        <end position="236"/>
    </location>
</feature>
<feature type="repeat" description="LRR 7">
    <location>
        <begin position="237"/>
        <end position="261"/>
    </location>
</feature>
<feature type="repeat" description="LRR 8">
    <location>
        <begin position="266"/>
        <end position="291"/>
    </location>
</feature>
<feature type="splice variant" id="VSP_008859" description="In isoform 2." evidence="5">
    <location>
        <begin position="1"/>
        <end position="53"/>
    </location>
</feature>
<feature type="sequence variant" id="VAR_064712" description="Found in a renal cell carcinoma case; somatic mutation." evidence="3">
    <original>L</original>
    <variation>H</variation>
    <location>
        <position position="63"/>
    </location>
</feature>
<accession>Q9NXK8</accession>
<accession>B3KSJ8</accession>
<accession>Q9H5K4</accession>
<evidence type="ECO:0000250" key="1"/>
<evidence type="ECO:0000255" key="2">
    <source>
        <dbReference type="PROSITE-ProRule" id="PRU00080"/>
    </source>
</evidence>
<evidence type="ECO:0000269" key="3">
    <source>
    </source>
</evidence>
<evidence type="ECO:0000269" key="4">
    <source>
    </source>
</evidence>
<evidence type="ECO:0000303" key="5">
    <source>
    </source>
</evidence>
<name>FXL12_HUMAN</name>